<dbReference type="EMBL" id="Z68301">
    <property type="protein sequence ID" value="CAA92629.1"/>
    <property type="molecule type" value="Genomic_DNA"/>
</dbReference>
<dbReference type="EMBL" id="Z70718">
    <property type="protein sequence ID" value="CAA92629.1"/>
    <property type="status" value="JOINED"/>
    <property type="molecule type" value="Genomic_DNA"/>
</dbReference>
<dbReference type="PIR" id="T18927">
    <property type="entry name" value="T18927"/>
</dbReference>
<dbReference type="RefSeq" id="NP_501830.1">
    <property type="nucleotide sequence ID" value="NM_069429.5"/>
</dbReference>
<dbReference type="SMR" id="Q17635"/>
<dbReference type="BioGRID" id="42976">
    <property type="interactions" value="29"/>
</dbReference>
<dbReference type="ComplexPortal" id="CPX-806">
    <property type="entry name" value="Ndc80 complex"/>
</dbReference>
<dbReference type="DIP" id="DIP-25850N"/>
<dbReference type="FunCoup" id="Q17635">
    <property type="interactions" value="917"/>
</dbReference>
<dbReference type="IntAct" id="Q17635">
    <property type="interactions" value="11"/>
</dbReference>
<dbReference type="STRING" id="6239.W01B6.9.1"/>
<dbReference type="PaxDb" id="6239-W01B6.9"/>
<dbReference type="PeptideAtlas" id="Q17635"/>
<dbReference type="EnsemblMetazoa" id="W01B6.9.1">
    <property type="protein sequence ID" value="W01B6.9.1"/>
    <property type="gene ID" value="WBGene00003576"/>
</dbReference>
<dbReference type="GeneID" id="177873"/>
<dbReference type="KEGG" id="cel:CELE_W01B6.9"/>
<dbReference type="UCSC" id="W01B6.9.1">
    <property type="organism name" value="c. elegans"/>
</dbReference>
<dbReference type="AGR" id="WB:WBGene00003576"/>
<dbReference type="CTD" id="177873"/>
<dbReference type="WormBase" id="W01B6.9">
    <property type="protein sequence ID" value="CE06537"/>
    <property type="gene ID" value="WBGene00003576"/>
    <property type="gene designation" value="ndc-80"/>
</dbReference>
<dbReference type="eggNOG" id="KOG0995">
    <property type="taxonomic scope" value="Eukaryota"/>
</dbReference>
<dbReference type="GeneTree" id="ENSGT00390000018386"/>
<dbReference type="HOGENOM" id="CLU_454349_0_0_1"/>
<dbReference type="InParanoid" id="Q17635"/>
<dbReference type="OMA" id="PSHKFQK"/>
<dbReference type="OrthoDB" id="7459479at2759"/>
<dbReference type="PhylomeDB" id="Q17635"/>
<dbReference type="SignaLink" id="Q17635"/>
<dbReference type="PRO" id="PR:Q17635"/>
<dbReference type="Proteomes" id="UP000001940">
    <property type="component" value="Chromosome IV"/>
</dbReference>
<dbReference type="Bgee" id="WBGene00003576">
    <property type="expression patterns" value="Expressed in adult organism and 4 other cell types or tissues"/>
</dbReference>
<dbReference type="GO" id="GO:0005737">
    <property type="term" value="C:cytoplasm"/>
    <property type="evidence" value="ECO:0007669"/>
    <property type="project" value="UniProtKB-KW"/>
</dbReference>
<dbReference type="GO" id="GO:0000776">
    <property type="term" value="C:kinetochore"/>
    <property type="evidence" value="ECO:0000314"/>
    <property type="project" value="UniProtKB"/>
</dbReference>
<dbReference type="GO" id="GO:0005874">
    <property type="term" value="C:microtubule"/>
    <property type="evidence" value="ECO:0000314"/>
    <property type="project" value="ComplexPortal"/>
</dbReference>
<dbReference type="GO" id="GO:0031262">
    <property type="term" value="C:Ndc80 complex"/>
    <property type="evidence" value="ECO:0000314"/>
    <property type="project" value="WormBase"/>
</dbReference>
<dbReference type="GO" id="GO:0005634">
    <property type="term" value="C:nucleus"/>
    <property type="evidence" value="ECO:0007669"/>
    <property type="project" value="UniProtKB-SubCell"/>
</dbReference>
<dbReference type="GO" id="GO:0008017">
    <property type="term" value="F:microtubule binding"/>
    <property type="evidence" value="ECO:0000250"/>
    <property type="project" value="UniProtKB"/>
</dbReference>
<dbReference type="GO" id="GO:0019904">
    <property type="term" value="F:protein domain specific binding"/>
    <property type="evidence" value="ECO:0000353"/>
    <property type="project" value="WormBase"/>
</dbReference>
<dbReference type="GO" id="GO:0044877">
    <property type="term" value="F:protein-containing complex binding"/>
    <property type="evidence" value="ECO:0000353"/>
    <property type="project" value="UniProtKB"/>
</dbReference>
<dbReference type="GO" id="GO:0051315">
    <property type="term" value="P:attachment of mitotic spindle microtubules to kinetochore"/>
    <property type="evidence" value="ECO:0000315"/>
    <property type="project" value="WormBase"/>
</dbReference>
<dbReference type="GO" id="GO:0008608">
    <property type="term" value="P:attachment of spindle microtubules to kinetochore"/>
    <property type="evidence" value="ECO:0000314"/>
    <property type="project" value="ComplexPortal"/>
</dbReference>
<dbReference type="GO" id="GO:0051301">
    <property type="term" value="P:cell division"/>
    <property type="evidence" value="ECO:0007669"/>
    <property type="project" value="UniProtKB-KW"/>
</dbReference>
<dbReference type="GO" id="GO:0035262">
    <property type="term" value="P:gonad morphogenesis"/>
    <property type="evidence" value="ECO:0000315"/>
    <property type="project" value="WormBase"/>
</dbReference>
<dbReference type="GO" id="GO:0051321">
    <property type="term" value="P:meiotic cell cycle"/>
    <property type="evidence" value="ECO:0007669"/>
    <property type="project" value="UniProtKB-KW"/>
</dbReference>
<dbReference type="GO" id="GO:0007079">
    <property type="term" value="P:mitotic chromosome movement towards spindle pole"/>
    <property type="evidence" value="ECO:0000316"/>
    <property type="project" value="UniProtKB"/>
</dbReference>
<dbReference type="GO" id="GO:1905561">
    <property type="term" value="P:positive regulation of kinetochore assembly"/>
    <property type="evidence" value="ECO:0000316"/>
    <property type="project" value="UniProtKB"/>
</dbReference>
<dbReference type="GO" id="GO:1901970">
    <property type="term" value="P:positive regulation of mitotic sister chromatid separation"/>
    <property type="evidence" value="ECO:0000316"/>
    <property type="project" value="UniProtKB"/>
</dbReference>
<dbReference type="GO" id="GO:1905342">
    <property type="term" value="P:positive regulation of protein localization to kinetochore"/>
    <property type="evidence" value="ECO:0000315"/>
    <property type="project" value="UniProtKB"/>
</dbReference>
<dbReference type="GO" id="GO:0034501">
    <property type="term" value="P:protein localization to kinetochore"/>
    <property type="evidence" value="ECO:0000315"/>
    <property type="project" value="UniProtKB"/>
</dbReference>
<dbReference type="GO" id="GO:1903394">
    <property type="term" value="P:protein localization to kinetochore involved in kinetochore assembly"/>
    <property type="evidence" value="ECO:0000315"/>
    <property type="project" value="UniProtKB"/>
</dbReference>
<dbReference type="GO" id="GO:0030334">
    <property type="term" value="P:regulation of cell migration"/>
    <property type="evidence" value="ECO:0000315"/>
    <property type="project" value="WormBase"/>
</dbReference>
<dbReference type="FunFam" id="1.10.418.30:FF:000004">
    <property type="entry name" value="Kinetochore protein ndc-80"/>
    <property type="match status" value="1"/>
</dbReference>
<dbReference type="Gene3D" id="1.10.418.30">
    <property type="entry name" value="Ncd80 complex, Ncd80 subunit"/>
    <property type="match status" value="1"/>
</dbReference>
<dbReference type="InterPro" id="IPR005550">
    <property type="entry name" value="Kinetochore_Ndc80"/>
</dbReference>
<dbReference type="InterPro" id="IPR055260">
    <property type="entry name" value="Ndc80_CH"/>
</dbReference>
<dbReference type="InterPro" id="IPR038273">
    <property type="entry name" value="Ndc80_sf"/>
</dbReference>
<dbReference type="PANTHER" id="PTHR10643">
    <property type="entry name" value="KINETOCHORE PROTEIN NDC80"/>
    <property type="match status" value="1"/>
</dbReference>
<dbReference type="PANTHER" id="PTHR10643:SF2">
    <property type="entry name" value="KINETOCHORE PROTEIN NDC80 HOMOLOG"/>
    <property type="match status" value="1"/>
</dbReference>
<dbReference type="Pfam" id="PF03801">
    <property type="entry name" value="Ndc80_HEC"/>
    <property type="match status" value="1"/>
</dbReference>
<accession>Q17635</accession>
<accession>Q23107</accession>
<keyword id="KW-0131">Cell cycle</keyword>
<keyword id="KW-0132">Cell division</keyword>
<keyword id="KW-0137">Centromere</keyword>
<keyword id="KW-0158">Chromosome</keyword>
<keyword id="KW-0175">Coiled coil</keyword>
<keyword id="KW-0963">Cytoplasm</keyword>
<keyword id="KW-0206">Cytoskeleton</keyword>
<keyword id="KW-0995">Kinetochore</keyword>
<keyword id="KW-0469">Meiosis</keyword>
<keyword id="KW-0498">Mitosis</keyword>
<keyword id="KW-0539">Nucleus</keyword>
<keyword id="KW-1185">Reference proteome</keyword>
<sequence>MFGDRRKTGGLNLNGRASIAITPTKRFTDYTGSTSVRKTDARPSLSQPRVSLFNTKNSSVAPRDVKSLVSLNGSKIYNFLVEYESSDAPSEQLIMKPRGKNDFIACFELIYQHLSKDYEFPRHERIEEEVSQIFKGLGYPYPLKNSYYQPMGSSHGYPHLLDALSWLIDIIRINSAVSEDTQNILFGDFMEQGKAQEKTLNYAWMTSTFRDYTNDRKAAENPSSSYWDDTKHRLRKYFEQSNEFEDMTKTAASALEMLNYECDEIEADKGNEASLKEEISRIRDDIRKAKDYLEQNLHVKQHMEKELAMVKSEQEEKISENEKVQKMVDDLKNKIELQKQIHGLTGKEVRQMNLDNNKDKEVVLEIQSELDRLSKETWKLKDEDFFKEQKSKFIHLAEQIMKILSGLNIQMNLEPLRAPTNERDLKDYWETLNKIWVPEISRQLHQRKLELETEQSRFSNKAVTAEERIQIQSETLCEAKKNEAREERIRRNERDSWKDARKHIEQRYEQLLNEKEVLLKQMKLDGSLEKEIEDETARMSATGEEHIQKRSQLEAGIRQILDLMVVEIAEIENKKIGFHVQCAGIEKAVL</sequence>
<proteinExistence type="evidence at protein level"/>
<comment type="function">
    <text evidence="2 3 4 5 6">Acts as a component of the essential kinetochore-associated ndc-80 complex, which is required for chromosome segregation in mitosis and meiosis and spindle checkpoint activity (PubMed:14522947). Plays a role in kinetochore assembly and recruits the checkpoint protein mdf-2 and the spindly-like protein spdl-1 to unattached kinetochores (PubMed:18765790, PubMed:19109417, PubMed:24231804). Mediates the formation of end-on kinetochore-microtubule attachments through recruitment of spdl-1 (PubMed:24231804). The ndc-80 complex synergistically enhances the affinity of the ska-1 complex for microtubules and may allow the ndc-80 complex to track depolymerizing microtubules (PubMed:23085020).</text>
</comment>
<comment type="subunit">
    <text evidence="2 6">Component of the NDC80 complex, which is composed of at least ndc-80 and him-10 (PubMed:14522947). The NDC80 complex interacts with knl-1 (PubMed:14522947). Interacts with the RZZ complex components rod-1 (via N-terminus) and zwl-1 (PubMed:24231804).</text>
</comment>
<comment type="interaction">
    <interactant intactId="EBI-314429">
        <id>Q17635</id>
    </interactant>
    <interactant intactId="EBI-326288">
        <id>Q21952</id>
        <label>him-10</label>
    </interactant>
    <organismsDiffer>false</organismsDiffer>
    <experiments>6</experiments>
</comment>
<comment type="subcellular location">
    <subcellularLocation>
        <location evidence="2">Nucleus</location>
    </subcellularLocation>
    <subcellularLocation>
        <location evidence="2 3">Chromosome</location>
        <location evidence="2 3">Centromere</location>
        <location evidence="2 3">Kinetochore</location>
    </subcellularLocation>
    <subcellularLocation>
        <location evidence="6">Cytoplasm</location>
        <location evidence="6">Cytoskeleton</location>
    </subcellularLocation>
    <text evidence="6">Localizes to kinetochores (PubMed:14522947). The NDC80 complex localizes to microtubules.</text>
</comment>
<comment type="disruption phenotype">
    <text evidence="3 6">RNAi-mediated knockdown results in embryonic lethality (PubMed:24231804). RNAi-mediated knockdown results in defective cell division characterized by irregular chromosome segregation, premature spindle pole separation and defective formation of kinetochore-microtubule attachments (PubMed:24231804). In addition there is reduced localization of the spindly-like protein spdl-1 to kinetochores (PubMed:18765790).</text>
</comment>
<comment type="similarity">
    <text evidence="7">Belongs to the NDC80/HEC1 family.</text>
</comment>
<evidence type="ECO:0000255" key="1"/>
<evidence type="ECO:0000269" key="2">
    <source>
    </source>
</evidence>
<evidence type="ECO:0000269" key="3">
    <source>
    </source>
</evidence>
<evidence type="ECO:0000269" key="4">
    <source>
    </source>
</evidence>
<evidence type="ECO:0000269" key="5">
    <source>
    </source>
</evidence>
<evidence type="ECO:0000269" key="6">
    <source>
    </source>
</evidence>
<evidence type="ECO:0000305" key="7"/>
<organism>
    <name type="scientific">Caenorhabditis elegans</name>
    <dbReference type="NCBI Taxonomy" id="6239"/>
    <lineage>
        <taxon>Eukaryota</taxon>
        <taxon>Metazoa</taxon>
        <taxon>Ecdysozoa</taxon>
        <taxon>Nematoda</taxon>
        <taxon>Chromadorea</taxon>
        <taxon>Rhabditida</taxon>
        <taxon>Rhabditina</taxon>
        <taxon>Rhabditomorpha</taxon>
        <taxon>Rhabditoidea</taxon>
        <taxon>Rhabditidae</taxon>
        <taxon>Peloderinae</taxon>
        <taxon>Caenorhabditis</taxon>
    </lineage>
</organism>
<reference key="1">
    <citation type="journal article" date="1998" name="Science">
        <title>Genome sequence of the nematode C. elegans: a platform for investigating biology.</title>
        <authorList>
            <consortium name="The C. elegans sequencing consortium"/>
        </authorList>
    </citation>
    <scope>NUCLEOTIDE SEQUENCE [LARGE SCALE GENOMIC DNA]</scope>
    <source>
        <strain>Bristol N2</strain>
    </source>
</reference>
<reference key="2">
    <citation type="journal article" date="2003" name="Genes Dev.">
        <title>KNL-1 directs assembly of the microtubule-binding interface of the kinetochore in C. elegans.</title>
        <authorList>
            <person name="Desai A."/>
            <person name="Rybina S."/>
            <person name="Mueller-Reichert T."/>
            <person name="Shevchenko A."/>
            <person name="Shevchenko A."/>
            <person name="Hyman A."/>
            <person name="Oegema K."/>
        </authorList>
    </citation>
    <scope>FUNCTION</scope>
    <scope>IDENTIFICATION BY MASS SPECTROMETRY</scope>
    <scope>IDENTIFICATION IN A COMPLEX WITH HIM-10 AND KNL-1</scope>
    <scope>SUBCELLULAR LOCATION</scope>
</reference>
<reference key="3">
    <citation type="journal article" date="2008" name="Genes Dev.">
        <title>A new mechanism controlling kinetochore-microtubule interactions revealed by comparison of two dynein-targeting components: SPDL-1 and the Rod/Zwilch/Zw10 complex.</title>
        <authorList>
            <person name="Gassmann R."/>
            <person name="Essex A."/>
            <person name="Hu J.-S."/>
            <person name="Maddox P.S."/>
            <person name="Motegi F."/>
            <person name="Sugimoto A."/>
            <person name="O'Rourke S.M."/>
            <person name="Bowerman B."/>
            <person name="McLeod I."/>
            <person name="Yates J.R. III"/>
            <person name="Oegema K."/>
            <person name="Cheeseman I.M."/>
            <person name="Desai A."/>
        </authorList>
    </citation>
    <scope>FUNCTION</scope>
    <scope>SUBCELLULAR LOCATION</scope>
    <scope>DISRUPTION PHENOTYPE</scope>
</reference>
<reference key="4">
    <citation type="journal article" date="2009" name="Mol. Biol. Cell">
        <title>Systematic analysis in Caenorhabditis elegans reveals that the spindle checkpoint is composed of two largely independent branches.</title>
        <authorList>
            <person name="Essex A."/>
            <person name="Dammermann A."/>
            <person name="Lewellyn L."/>
            <person name="Oegema K."/>
            <person name="Desai A."/>
        </authorList>
    </citation>
    <scope>FUNCTION</scope>
</reference>
<reference key="5">
    <citation type="journal article" date="2012" name="Dev. Cell">
        <title>The kinetochore-bound Ska1 complex tracks depolymerizing microtubules and binds to curved protofilaments.</title>
        <authorList>
            <person name="Schmidt J.C."/>
            <person name="Arthanari H."/>
            <person name="Boeszoermenyi A."/>
            <person name="Dashkevich N.M."/>
            <person name="Wilson-Kubalek E.M."/>
            <person name="Monnier N."/>
            <person name="Markus M."/>
            <person name="Oberer M."/>
            <person name="Milligan R.A."/>
            <person name="Bathe M."/>
            <person name="Wagner G."/>
            <person name="Grishchuk E.L."/>
            <person name="Cheeseman I.M."/>
        </authorList>
    </citation>
    <scope>FUNCTION</scope>
</reference>
<reference key="6">
    <citation type="journal article" date="2013" name="Science">
        <title>Crosstalk between microtubule attachment complexes ensures accurate chromosome segregation.</title>
        <authorList>
            <person name="Cheerambathur D.K."/>
            <person name="Gassmann R."/>
            <person name="Cook B."/>
            <person name="Oegema K."/>
            <person name="Desai A."/>
        </authorList>
    </citation>
    <scope>FUNCTION</scope>
    <scope>INTERACTION WITH ROD-1 AND ZWL-1</scope>
    <scope>DISRUPTION PHENOTYPE</scope>
    <scope>MUTAGENESIS OF THR-8; SER-18; SER-44; SER-51; LYS-100; LYS-144 AND HIS-155</scope>
</reference>
<gene>
    <name type="primary">ndc-80</name>
    <name type="ORF">W01B6.9</name>
</gene>
<protein>
    <recommendedName>
        <fullName>Kinetochore protein ndc-80</fullName>
        <shortName>CeNDC-80</shortName>
    </recommendedName>
    <alternativeName>
        <fullName>Hec1 homolog</fullName>
    </alternativeName>
</protein>
<name>NDC80_CAEEL</name>
<feature type="chain" id="PRO_0000249557" description="Kinetochore protein ndc-80">
    <location>
        <begin position="1"/>
        <end position="590"/>
    </location>
</feature>
<feature type="coiled-coil region" evidence="1">
    <location>
        <begin position="269"/>
        <end position="342"/>
    </location>
</feature>
<feature type="coiled-coil region" evidence="1">
    <location>
        <begin position="450"/>
        <end position="525"/>
    </location>
</feature>
<feature type="mutagenesis site" description="Rescues embryonic lethality and chromosome segregation defects in single knockdown mutant; when associated with A-18, A-44 and A-51." evidence="6">
    <original>T</original>
    <variation>A</variation>
    <location>
        <position position="8"/>
    </location>
</feature>
<feature type="mutagenesis site" description="Rescues embryonic lethality and chromosome segregation defects in single knockdown mutant; when associated with A-8, A-44 and A-51." evidence="6">
    <original>S</original>
    <variation>A</variation>
    <location>
        <position position="18"/>
    </location>
</feature>
<feature type="mutagenesis site" description="Rescues embryonic lethality and chromosome segregation defects in single knockdown mutant; when associated with A-8, A-18 and A-51." evidence="6">
    <original>S</original>
    <variation>A</variation>
    <location>
        <position position="44"/>
    </location>
</feature>
<feature type="mutagenesis site" description="Rescues embryonic lethality and chromosome segregation defects in single knockdown mutant; when associated with A-8, A-18 and A-44." evidence="6">
    <original>S</original>
    <variation>A</variation>
    <location>
        <position position="51"/>
    </location>
</feature>
<feature type="mutagenesis site" description="Embryonic lethal and inhibits NDC80 complex binding to microtubules; when associated with A-144 and A-155." evidence="6">
    <original>K</original>
    <variation>A</variation>
    <location>
        <position position="100"/>
    </location>
</feature>
<feature type="mutagenesis site" description="Embryonic lethal and inhibits NDC80 complex binding to microtubules; when associated with A-100 and A-155." evidence="6">
    <original>K</original>
    <variation>A</variation>
    <location>
        <position position="144"/>
    </location>
</feature>
<feature type="mutagenesis site" description="Embryonic lethal and inhibits NDC80 complex binding to microtubules; when associated with A-100 and A-144." evidence="6">
    <original>H</original>
    <variation>A</variation>
    <location>
        <position position="155"/>
    </location>
</feature>